<proteinExistence type="inferred from homology"/>
<comment type="function">
    <text evidence="1">Binds directly to 23S ribosomal RNA and is necessary for the in vitro assembly process of the 50S ribosomal subunit. It is not involved in the protein synthesizing functions of that subunit.</text>
</comment>
<comment type="similarity">
    <text evidence="1">Belongs to the bacterial ribosomal protein bL20 family.</text>
</comment>
<feature type="chain" id="PRO_1000049031" description="Large ribosomal subunit protein bL20">
    <location>
        <begin position="1"/>
        <end position="119"/>
    </location>
</feature>
<accession>Q12BR0</accession>
<organism>
    <name type="scientific">Polaromonas sp. (strain JS666 / ATCC BAA-500)</name>
    <dbReference type="NCBI Taxonomy" id="296591"/>
    <lineage>
        <taxon>Bacteria</taxon>
        <taxon>Pseudomonadati</taxon>
        <taxon>Pseudomonadota</taxon>
        <taxon>Betaproteobacteria</taxon>
        <taxon>Burkholderiales</taxon>
        <taxon>Comamonadaceae</taxon>
        <taxon>Polaromonas</taxon>
    </lineage>
</organism>
<keyword id="KW-1185">Reference proteome</keyword>
<keyword id="KW-0687">Ribonucleoprotein</keyword>
<keyword id="KW-0689">Ribosomal protein</keyword>
<keyword id="KW-0694">RNA-binding</keyword>
<keyword id="KW-0699">rRNA-binding</keyword>
<gene>
    <name evidence="1" type="primary">rplT</name>
    <name type="ordered locus">Bpro_2105</name>
</gene>
<protein>
    <recommendedName>
        <fullName evidence="1">Large ribosomal subunit protein bL20</fullName>
    </recommendedName>
    <alternativeName>
        <fullName evidence="2">50S ribosomal protein L20</fullName>
    </alternativeName>
</protein>
<dbReference type="EMBL" id="CP000316">
    <property type="protein sequence ID" value="ABE44032.1"/>
    <property type="molecule type" value="Genomic_DNA"/>
</dbReference>
<dbReference type="RefSeq" id="WP_011483030.1">
    <property type="nucleotide sequence ID" value="NC_007948.1"/>
</dbReference>
<dbReference type="SMR" id="Q12BR0"/>
<dbReference type="STRING" id="296591.Bpro_2105"/>
<dbReference type="KEGG" id="pol:Bpro_2105"/>
<dbReference type="eggNOG" id="COG0292">
    <property type="taxonomic scope" value="Bacteria"/>
</dbReference>
<dbReference type="HOGENOM" id="CLU_123265_0_1_4"/>
<dbReference type="OrthoDB" id="9808966at2"/>
<dbReference type="Proteomes" id="UP000001983">
    <property type="component" value="Chromosome"/>
</dbReference>
<dbReference type="GO" id="GO:1990904">
    <property type="term" value="C:ribonucleoprotein complex"/>
    <property type="evidence" value="ECO:0007669"/>
    <property type="project" value="UniProtKB-KW"/>
</dbReference>
<dbReference type="GO" id="GO:0005840">
    <property type="term" value="C:ribosome"/>
    <property type="evidence" value="ECO:0007669"/>
    <property type="project" value="UniProtKB-KW"/>
</dbReference>
<dbReference type="GO" id="GO:0019843">
    <property type="term" value="F:rRNA binding"/>
    <property type="evidence" value="ECO:0007669"/>
    <property type="project" value="UniProtKB-UniRule"/>
</dbReference>
<dbReference type="GO" id="GO:0003735">
    <property type="term" value="F:structural constituent of ribosome"/>
    <property type="evidence" value="ECO:0007669"/>
    <property type="project" value="InterPro"/>
</dbReference>
<dbReference type="GO" id="GO:0000027">
    <property type="term" value="P:ribosomal large subunit assembly"/>
    <property type="evidence" value="ECO:0007669"/>
    <property type="project" value="UniProtKB-UniRule"/>
</dbReference>
<dbReference type="GO" id="GO:0006412">
    <property type="term" value="P:translation"/>
    <property type="evidence" value="ECO:0007669"/>
    <property type="project" value="InterPro"/>
</dbReference>
<dbReference type="CDD" id="cd07026">
    <property type="entry name" value="Ribosomal_L20"/>
    <property type="match status" value="1"/>
</dbReference>
<dbReference type="FunFam" id="1.10.1900.20:FF:000001">
    <property type="entry name" value="50S ribosomal protein L20"/>
    <property type="match status" value="1"/>
</dbReference>
<dbReference type="Gene3D" id="6.10.160.10">
    <property type="match status" value="1"/>
</dbReference>
<dbReference type="Gene3D" id="1.10.1900.20">
    <property type="entry name" value="Ribosomal protein L20"/>
    <property type="match status" value="1"/>
</dbReference>
<dbReference type="HAMAP" id="MF_00382">
    <property type="entry name" value="Ribosomal_bL20"/>
    <property type="match status" value="1"/>
</dbReference>
<dbReference type="InterPro" id="IPR005813">
    <property type="entry name" value="Ribosomal_bL20"/>
</dbReference>
<dbReference type="InterPro" id="IPR049946">
    <property type="entry name" value="RIBOSOMAL_L20_CS"/>
</dbReference>
<dbReference type="InterPro" id="IPR035566">
    <property type="entry name" value="Ribosomal_protein_bL20_C"/>
</dbReference>
<dbReference type="NCBIfam" id="TIGR01032">
    <property type="entry name" value="rplT_bact"/>
    <property type="match status" value="1"/>
</dbReference>
<dbReference type="PANTHER" id="PTHR10986">
    <property type="entry name" value="39S RIBOSOMAL PROTEIN L20"/>
    <property type="match status" value="1"/>
</dbReference>
<dbReference type="Pfam" id="PF00453">
    <property type="entry name" value="Ribosomal_L20"/>
    <property type="match status" value="1"/>
</dbReference>
<dbReference type="PRINTS" id="PR00062">
    <property type="entry name" value="RIBOSOMALL20"/>
</dbReference>
<dbReference type="SUPFAM" id="SSF74731">
    <property type="entry name" value="Ribosomal protein L20"/>
    <property type="match status" value="1"/>
</dbReference>
<dbReference type="PROSITE" id="PS00937">
    <property type="entry name" value="RIBOSOMAL_L20"/>
    <property type="match status" value="1"/>
</dbReference>
<reference key="1">
    <citation type="journal article" date="2008" name="Appl. Environ. Microbiol.">
        <title>The genome of Polaromonas sp. strain JS666: insights into the evolution of a hydrocarbon- and xenobiotic-degrading bacterium, and features of relevance to biotechnology.</title>
        <authorList>
            <person name="Mattes T.E."/>
            <person name="Alexander A.K."/>
            <person name="Richardson P.M."/>
            <person name="Munk A.C."/>
            <person name="Han C.S."/>
            <person name="Stothard P."/>
            <person name="Coleman N.V."/>
        </authorList>
    </citation>
    <scope>NUCLEOTIDE SEQUENCE [LARGE SCALE GENOMIC DNA]</scope>
    <source>
        <strain>JS666 / ATCC BAA-500</strain>
    </source>
</reference>
<sequence>MPRVKRGVTARARHKKVLALAKGFRGRRGNVFRIAKEAVMKAGQYAYRDRRTKKRVFRQLWIARINAASRSFGMTYSQFANGLKKAGIEIDRKVLSDMAIHDSAAFGAIVEQVKAKLAA</sequence>
<name>RL20_POLSJ</name>
<evidence type="ECO:0000255" key="1">
    <source>
        <dbReference type="HAMAP-Rule" id="MF_00382"/>
    </source>
</evidence>
<evidence type="ECO:0000305" key="2"/>